<sequence>MKVSVLITLAVLGVMFVWASAAELEERGSDQRDSPAWLKSMERIFQSGERECRKMFGGCSVDSDCCAHLGCKPTLKYCAWDGTFGK</sequence>
<dbReference type="PDB" id="2A2V">
    <property type="method" value="NMR"/>
    <property type="chains" value="A=51-84"/>
</dbReference>
<dbReference type="PDB" id="3J5Q">
    <property type="method" value="EM"/>
    <property type="resolution" value="3.80 A"/>
    <property type="chains" value="A/C/F/H=51-81"/>
</dbReference>
<dbReference type="PDBsum" id="2A2V"/>
<dbReference type="PDBsum" id="3J5Q"/>
<dbReference type="SMR" id="P0C247"/>
<dbReference type="TCDB" id="8.B.5.3.5">
    <property type="family name" value="the na(+)/k(+)/ca(2+) channel targeting tarantula huwentoxin (tht) family"/>
</dbReference>
<dbReference type="ArachnoServer" id="AS000043">
    <property type="toxin name" value="kappa-theraphotoxin-Cg1a"/>
</dbReference>
<dbReference type="EvolutionaryTrace" id="P0C247"/>
<dbReference type="GO" id="GO:0005576">
    <property type="term" value="C:extracellular region"/>
    <property type="evidence" value="ECO:0007669"/>
    <property type="project" value="UniProtKB-SubCell"/>
</dbReference>
<dbReference type="GO" id="GO:0008200">
    <property type="term" value="F:ion channel inhibitor activity"/>
    <property type="evidence" value="ECO:0007669"/>
    <property type="project" value="InterPro"/>
</dbReference>
<dbReference type="GO" id="GO:0015459">
    <property type="term" value="F:potassium channel regulator activity"/>
    <property type="evidence" value="ECO:0007669"/>
    <property type="project" value="UniProtKB-KW"/>
</dbReference>
<dbReference type="GO" id="GO:0017080">
    <property type="term" value="F:sodium channel regulator activity"/>
    <property type="evidence" value="ECO:0007669"/>
    <property type="project" value="UniProtKB-KW"/>
</dbReference>
<dbReference type="GO" id="GO:0090729">
    <property type="term" value="F:toxin activity"/>
    <property type="evidence" value="ECO:0007669"/>
    <property type="project" value="UniProtKB-KW"/>
</dbReference>
<dbReference type="InterPro" id="IPR011696">
    <property type="entry name" value="Huwentoxin-1"/>
</dbReference>
<dbReference type="Pfam" id="PF07740">
    <property type="entry name" value="Toxin_12"/>
    <property type="match status" value="1"/>
</dbReference>
<dbReference type="SUPFAM" id="SSF57059">
    <property type="entry name" value="omega toxin-like"/>
    <property type="match status" value="1"/>
</dbReference>
<keyword id="KW-0002">3D-structure</keyword>
<keyword id="KW-0027">Amidation</keyword>
<keyword id="KW-0903">Direct protein sequencing</keyword>
<keyword id="KW-1015">Disulfide bond</keyword>
<keyword id="KW-0872">Ion channel impairing toxin</keyword>
<keyword id="KW-0960">Knottin</keyword>
<keyword id="KW-0528">Neurotoxin</keyword>
<keyword id="KW-0632">Potassium channel impairing toxin</keyword>
<keyword id="KW-0964">Secreted</keyword>
<keyword id="KW-0732">Signal</keyword>
<keyword id="KW-0800">Toxin</keyword>
<keyword id="KW-1220">Voltage-gated potassium channel impairing toxin</keyword>
<keyword id="KW-0738">Voltage-gated sodium channel impairing toxin</keyword>
<comment type="function">
    <text evidence="3 5">This toxin acts as a voltage-dependent gating-modifier (PubMed:25240294). It inhibits the sodium conductance (IC(50)=124 nM) and slows the fast inactivation (EC(50)=1180 nM) of Nav1.5/SCN5A (PubMed:17176080, PubMed:25240294). It significantly shifts the activation to more depolarized voltages and decreases the deactivation of Nav1.5 currents upon extreme depolarization, but only slightly affects voltage-dependence of steady-state inactivation (PubMed:17176080, PubMed:25240294). In addition, this toxin causes an approximately five-fold decrease in the rate of recovery from inactivation and an approximately 1.9-fold reduction in the closed-state inactivation rate (PubMed:25240294). This toxin integrates the functions of site 3 toxins (alpha-scorpion toxins) with site 4 toxins (beta-scorpion and spider toxins) by targeting multiple sites on Nav1.5 (PubMed:25240294). Also shows inhibition of voltage-gated potassium channels (5 uM completely inhibits Kv2.1/KCNB1, whereas 5 uM moderately inhibits Kv4.2/KCND2 Kv4.1/KCND1 channels) (PubMed:17176080).</text>
</comment>
<comment type="subcellular location">
    <subcellularLocation>
        <location evidence="3 4 5">Secreted</location>
    </subcellularLocation>
</comment>
<comment type="tissue specificity">
    <text evidence="10 11">Expressed by the venom gland.</text>
</comment>
<comment type="domain">
    <text evidence="3">The presence of a 'disulfide through disulfide knot' structurally defines this protein as a knottin.</text>
</comment>
<comment type="mass spectrometry"/>
<comment type="miscellaneous">
    <text evidence="10">Negative results: does not show effect on Kv1.1/KCNA1, Kv1.2/KCNA2, Kv1.3/KCNA3, Kv1.4/KCNA4, Kv3.1/KCNC1 (all expressed in oocytes), voltage-gated sodium channels (Nav1/SCN) (from DRG neurons), and in a range of voltage-gated calcium channels (expressed in rat DRG neurons) (PubMed:17176080). Does not show significant toxic symptoms when injected into mice and into cockroaches (PubMed:17176080).</text>
</comment>
<comment type="similarity">
    <text evidence="9">Belongs to the neurotoxin 10 (Hwtx-1) family. 28 (Jztx-11) subfamily.</text>
</comment>
<accession>P0C247</accession>
<evidence type="ECO:0000250" key="1"/>
<evidence type="ECO:0000255" key="2"/>
<evidence type="ECO:0000269" key="3">
    <source>
    </source>
</evidence>
<evidence type="ECO:0000269" key="4">
    <source>
    </source>
</evidence>
<evidence type="ECO:0000269" key="5">
    <source>
    </source>
</evidence>
<evidence type="ECO:0000303" key="6">
    <source>
    </source>
</evidence>
<evidence type="ECO:0000303" key="7">
    <source>
    </source>
</evidence>
<evidence type="ECO:0000303" key="8">
    <source>
    </source>
</evidence>
<evidence type="ECO:0000305" key="9"/>
<evidence type="ECO:0000305" key="10">
    <source>
    </source>
</evidence>
<evidence type="ECO:0000305" key="11">
    <source>
    </source>
</evidence>
<evidence type="ECO:0007744" key="12">
    <source>
        <dbReference type="PDB" id="2A2V"/>
    </source>
</evidence>
<evidence type="ECO:0007829" key="13">
    <source>
        <dbReference type="PDB" id="2A2V"/>
    </source>
</evidence>
<feature type="signal peptide" evidence="2">
    <location>
        <begin position="1"/>
        <end position="21"/>
    </location>
</feature>
<feature type="propeptide" id="PRO_0000287431" evidence="3 4">
    <location>
        <begin position="22"/>
        <end position="50"/>
    </location>
</feature>
<feature type="peptide" id="PRO_0000262456" description="Kappa-theraphotoxin-Cg1a 1" evidence="3 4 5">
    <location>
        <begin position="51"/>
        <end position="84"/>
    </location>
</feature>
<feature type="region of interest" description="Involved in active face" evidence="1">
    <location>
        <begin position="55"/>
        <end position="56"/>
    </location>
</feature>
<feature type="site" description="Involved in active face" evidence="1">
    <location>
        <position position="80"/>
    </location>
</feature>
<feature type="modified residue" description="Phenylalanine amide" evidence="3">
    <location>
        <position position="84"/>
    </location>
</feature>
<feature type="disulfide bond" evidence="3 12">
    <location>
        <begin position="52"/>
        <end position="66"/>
    </location>
</feature>
<feature type="disulfide bond" evidence="3 12">
    <location>
        <begin position="59"/>
        <end position="71"/>
    </location>
</feature>
<feature type="disulfide bond" evidence="3 12">
    <location>
        <begin position="65"/>
        <end position="78"/>
    </location>
</feature>
<feature type="helix" evidence="13">
    <location>
        <begin position="62"/>
        <end position="64"/>
    </location>
</feature>
<feature type="strand" evidence="13">
    <location>
        <begin position="73"/>
        <end position="78"/>
    </location>
</feature>
<proteinExistence type="evidence at protein level"/>
<protein>
    <recommendedName>
        <fullName evidence="8">Kappa-theraphotoxin-Cg1a 1</fullName>
        <shortName evidence="8">Kappa-TRTX-Cg1a</shortName>
    </recommendedName>
    <alternativeName>
        <fullName>Jingzhaotoxin-11</fullName>
        <shortName>JZTX-11</shortName>
    </alternativeName>
    <alternativeName>
        <fullName evidence="6">Jingzhaotoxin-XI</fullName>
        <shortName evidence="6">JZTX-XI</shortName>
    </alternativeName>
    <alternativeName>
        <fullName evidence="7">Peptide F4-13.64</fullName>
    </alternativeName>
</protein>
<name>JZ11A_CHIGU</name>
<reference key="1">
    <citation type="journal article" date="2006" name="Biochemistry">
        <title>Solution structure and functional characterization of Jingzhaotoxin-XI: a novel gating modifier of both potassium and sodium channels.</title>
        <authorList>
            <person name="Liao Z."/>
            <person name="Yuan C."/>
            <person name="Deng M."/>
            <person name="Li J."/>
            <person name="Chen J."/>
            <person name="Yang Y."/>
            <person name="Hu W."/>
            <person name="Liang S."/>
        </authorList>
    </citation>
    <scope>NUCLEOTIDE SEQUENCE [MRNA]</scope>
    <scope>PROTEIN SEQUENCE OF 51-84</scope>
    <scope>SUBCELLULAR LOCATION</scope>
    <scope>FUNCTION</scope>
    <scope>MASS SPECTROMETRY</scope>
    <scope>STRUCTURE BY NMR OF 51-84</scope>
    <scope>AMIDATION AT PHE-84</scope>
    <scope>DISULFIDE BONDS</scope>
    <source>
        <tissue>Venom</tissue>
        <tissue>Venom gland</tissue>
    </source>
</reference>
<reference key="2">
    <citation type="journal article" date="2007" name="Proteomics">
        <title>Proteomic and peptidomic analysis of the venom from Chinese tarantula Chilobrachys jingzhao.</title>
        <authorList>
            <person name="Liao Z."/>
            <person name="Cao J."/>
            <person name="Li S."/>
            <person name="Yan X."/>
            <person name="Hu W."/>
            <person name="He Q."/>
            <person name="Chen J."/>
            <person name="Tang J."/>
            <person name="Xie J."/>
            <person name="Liang S."/>
        </authorList>
    </citation>
    <scope>PROTEIN SEQUENCE OF 51-84</scope>
    <scope>SUBCELLULAR LOCATION</scope>
    <source>
        <tissue>Venom</tissue>
    </source>
</reference>
<reference key="3">
    <citation type="journal article" date="2014" name="Toxicon">
        <title>The tarantula toxin jingzhaotoxin-XI (kappa-theraphotoxin-Cj1a) regulates the activation and inactivation of the voltage-gated sodium channel Nav1.5.</title>
        <authorList>
            <person name="Tang C."/>
            <person name="Zhou X."/>
            <person name="Huang Y."/>
            <person name="Zhang Y."/>
            <person name="Hu Z."/>
            <person name="Wang M."/>
            <person name="Chen P."/>
            <person name="Liu Z."/>
            <person name="Liang S."/>
        </authorList>
    </citation>
    <scope>PROTEIN SEQUENCE OF 51-84</scope>
    <scope>FUNCTION</scope>
    <scope>SUBCELLULAR LOCATION</scope>
    <source>
        <tissue>Venom</tissue>
    </source>
</reference>
<organism>
    <name type="scientific">Chilobrachys guangxiensis</name>
    <name type="common">Chinese earth tiger tarantula</name>
    <name type="synonym">Chilobrachys jingzhao</name>
    <dbReference type="NCBI Taxonomy" id="278060"/>
    <lineage>
        <taxon>Eukaryota</taxon>
        <taxon>Metazoa</taxon>
        <taxon>Ecdysozoa</taxon>
        <taxon>Arthropoda</taxon>
        <taxon>Chelicerata</taxon>
        <taxon>Arachnida</taxon>
        <taxon>Araneae</taxon>
        <taxon>Mygalomorphae</taxon>
        <taxon>Theraphosidae</taxon>
        <taxon>Chilobrachys</taxon>
    </lineage>
</organism>